<comment type="function">
    <text evidence="3">Catalyzes the hydrolysis of fatty acid esters with a preference for long chain fatty acids (C16-C18).</text>
</comment>
<comment type="catalytic activity">
    <reaction>
        <text>a triacylglycerol + H2O = a diacylglycerol + a fatty acid + H(+)</text>
        <dbReference type="Rhea" id="RHEA:12044"/>
        <dbReference type="ChEBI" id="CHEBI:15377"/>
        <dbReference type="ChEBI" id="CHEBI:15378"/>
        <dbReference type="ChEBI" id="CHEBI:17855"/>
        <dbReference type="ChEBI" id="CHEBI:18035"/>
        <dbReference type="ChEBI" id="CHEBI:28868"/>
        <dbReference type="EC" id="3.1.1.3"/>
    </reaction>
</comment>
<comment type="activity regulation">
    <text evidence="3">Strongly inhibited by Ag(+). The cations Ca(2+) and Mg(2+) do not significantly reduce the lipolytic activity of SCO7513, whereas high concentrations of Co(2+) and Cu(2+) partially inhibit it. Is not inhibited by DTT in vitro. Is resistant to PMSF inhibition, except in the presence of Ca(2+).</text>
</comment>
<comment type="biophysicochemical properties">
    <phDependence>
        <text evidence="3">Optimum pH is 8.5-9. Active from pH 8 to 10. Rapidly loses its activity when incubated at pH in the range between 6.5 and 11 for 24 hours.</text>
    </phDependence>
    <temperatureDependence>
        <text evidence="3">Optimum temperature is 45-55 degrees Celsius. The activity drops quickly at temperatures below 30 degrees Celsius.</text>
    </temperatureDependence>
</comment>
<comment type="subunit">
    <text evidence="1">Monomer.</text>
</comment>
<comment type="subcellular location">
    <subcellularLocation>
        <location evidence="3">Secreted</location>
    </subcellularLocation>
</comment>
<comment type="similarity">
    <text evidence="4">Belongs to the 'GDSL' lipolytic enzyme family.</text>
</comment>
<evidence type="ECO:0000250" key="1"/>
<evidence type="ECO:0000255" key="2"/>
<evidence type="ECO:0000269" key="3">
    <source ref="2"/>
</evidence>
<evidence type="ECO:0000305" key="4"/>
<feature type="signal peptide" evidence="2">
    <location>
        <begin position="1"/>
        <end position="31"/>
    </location>
</feature>
<feature type="chain" id="PRO_0000407312" description="Lipase 2">
    <location>
        <begin position="32"/>
        <end position="295"/>
    </location>
</feature>
<feature type="active site" description="Nucleophile" evidence="1">
    <location>
        <position position="48"/>
    </location>
</feature>
<feature type="active site" evidence="1">
    <location>
        <position position="275"/>
    </location>
</feature>
<feature type="disulfide bond" evidence="1">
    <location>
        <begin position="65"/>
        <end position="89"/>
    </location>
</feature>
<feature type="disulfide bond" evidence="1">
    <location>
        <begin position="138"/>
        <end position="152"/>
    </location>
</feature>
<feature type="disulfide bond" evidence="1">
    <location>
        <begin position="205"/>
        <end position="254"/>
    </location>
</feature>
<gene>
    <name type="ordered locus">SCO7513</name>
    <name type="ORF">SCBAC25F8.05c</name>
</gene>
<keyword id="KW-1015">Disulfide bond</keyword>
<keyword id="KW-0378">Hydrolase</keyword>
<keyword id="KW-0442">Lipid degradation</keyword>
<keyword id="KW-0443">Lipid metabolism</keyword>
<keyword id="KW-1185">Reference proteome</keyword>
<keyword id="KW-0964">Secreted</keyword>
<keyword id="KW-0719">Serine esterase</keyword>
<keyword id="KW-0732">Signal</keyword>
<dbReference type="EC" id="3.1.1.3"/>
<dbReference type="EMBL" id="AL939131">
    <property type="protein sequence ID" value="CAC42140.1"/>
    <property type="molecule type" value="Genomic_DNA"/>
</dbReference>
<dbReference type="RefSeq" id="NP_631558.1">
    <property type="nucleotide sequence ID" value="NC_003888.3"/>
</dbReference>
<dbReference type="RefSeq" id="WP_011031714.1">
    <property type="nucleotide sequence ID" value="NZ_VNID01000005.1"/>
</dbReference>
<dbReference type="SMR" id="Q93J06"/>
<dbReference type="STRING" id="100226.gene:17765173"/>
<dbReference type="PaxDb" id="100226-SCO7513"/>
<dbReference type="KEGG" id="sco:SCO7513"/>
<dbReference type="PATRIC" id="fig|100226.15.peg.7626"/>
<dbReference type="eggNOG" id="COG2755">
    <property type="taxonomic scope" value="Bacteria"/>
</dbReference>
<dbReference type="HOGENOM" id="CLU_038449_4_1_11"/>
<dbReference type="InParanoid" id="Q93J06"/>
<dbReference type="OrthoDB" id="5503950at2"/>
<dbReference type="PhylomeDB" id="Q93J06"/>
<dbReference type="BRENDA" id="3.1.1.3">
    <property type="organism ID" value="5998"/>
</dbReference>
<dbReference type="Proteomes" id="UP000001973">
    <property type="component" value="Chromosome"/>
</dbReference>
<dbReference type="GO" id="GO:0005576">
    <property type="term" value="C:extracellular region"/>
    <property type="evidence" value="ECO:0000314"/>
    <property type="project" value="UniProtKB"/>
</dbReference>
<dbReference type="GO" id="GO:0106435">
    <property type="term" value="F:carboxylesterase activity"/>
    <property type="evidence" value="ECO:0000314"/>
    <property type="project" value="UniProtKB"/>
</dbReference>
<dbReference type="GO" id="GO:0004806">
    <property type="term" value="F:triacylglycerol lipase activity"/>
    <property type="evidence" value="ECO:0000318"/>
    <property type="project" value="GO_Central"/>
</dbReference>
<dbReference type="GO" id="GO:0019433">
    <property type="term" value="P:triglyceride catabolic process"/>
    <property type="evidence" value="ECO:0000318"/>
    <property type="project" value="GO_Central"/>
</dbReference>
<dbReference type="CDD" id="cd01823">
    <property type="entry name" value="SEST_like"/>
    <property type="match status" value="1"/>
</dbReference>
<dbReference type="Gene3D" id="3.40.50.1110">
    <property type="entry name" value="SGNH hydrolase"/>
    <property type="match status" value="1"/>
</dbReference>
<dbReference type="InterPro" id="IPR037460">
    <property type="entry name" value="SEST-like"/>
</dbReference>
<dbReference type="InterPro" id="IPR013830">
    <property type="entry name" value="SGNH_hydro"/>
</dbReference>
<dbReference type="InterPro" id="IPR036514">
    <property type="entry name" value="SGNH_hydro_sf"/>
</dbReference>
<dbReference type="PANTHER" id="PTHR37981">
    <property type="entry name" value="LIPASE 2"/>
    <property type="match status" value="1"/>
</dbReference>
<dbReference type="PANTHER" id="PTHR37981:SF1">
    <property type="entry name" value="SGNH HYDROLASE-TYPE ESTERASE DOMAIN-CONTAINING PROTEIN"/>
    <property type="match status" value="1"/>
</dbReference>
<dbReference type="Pfam" id="PF13472">
    <property type="entry name" value="Lipase_GDSL_2"/>
    <property type="match status" value="1"/>
</dbReference>
<dbReference type="SUPFAM" id="SSF52266">
    <property type="entry name" value="SGNH hydrolase"/>
    <property type="match status" value="1"/>
</dbReference>
<protein>
    <recommendedName>
        <fullName>Lipase 2</fullName>
        <ecNumber>3.1.1.3</ecNumber>
    </recommendedName>
</protein>
<organism>
    <name type="scientific">Streptomyces coelicolor (strain ATCC BAA-471 / A3(2) / M145)</name>
    <dbReference type="NCBI Taxonomy" id="100226"/>
    <lineage>
        <taxon>Bacteria</taxon>
        <taxon>Bacillati</taxon>
        <taxon>Actinomycetota</taxon>
        <taxon>Actinomycetes</taxon>
        <taxon>Kitasatosporales</taxon>
        <taxon>Streptomycetaceae</taxon>
        <taxon>Streptomyces</taxon>
        <taxon>Streptomyces albidoflavus group</taxon>
    </lineage>
</organism>
<sequence length="295" mass="30494">MPKPALRRVMTATVAAVGTLALGLTDATAHAAPAQATPTLDYVALGDSYSAGSGVLPVDPANLLCLRSTANYPHVIADTTGARLTDVTCGAAQTADFTRAQYPGVAPQLDALGTGTDLVTLTIGGNDNSTFINAITACGTAGVLSGGKGSPCKDRHGTSFDDEIEANTYPALKEALLGVRARAPHARVAALGYPWITPATADPSCFLKLPLAAGDVPYLRAIQAHLNDAVRRAAEETGATYVDFSGVSDGHDACEAPGTRWIEPLLFGHSLVPVHPNALGERRMAEHTMDVLGLD</sequence>
<name>LIP2_STRCO</name>
<reference key="1">
    <citation type="journal article" date="2002" name="Nature">
        <title>Complete genome sequence of the model actinomycete Streptomyces coelicolor A3(2).</title>
        <authorList>
            <person name="Bentley S.D."/>
            <person name="Chater K.F."/>
            <person name="Cerdeno-Tarraga A.-M."/>
            <person name="Challis G.L."/>
            <person name="Thomson N.R."/>
            <person name="James K.D."/>
            <person name="Harris D.E."/>
            <person name="Quail M.A."/>
            <person name="Kieser H."/>
            <person name="Harper D."/>
            <person name="Bateman A."/>
            <person name="Brown S."/>
            <person name="Chandra G."/>
            <person name="Chen C.W."/>
            <person name="Collins M."/>
            <person name="Cronin A."/>
            <person name="Fraser A."/>
            <person name="Goble A."/>
            <person name="Hidalgo J."/>
            <person name="Hornsby T."/>
            <person name="Howarth S."/>
            <person name="Huang C.-H."/>
            <person name="Kieser T."/>
            <person name="Larke L."/>
            <person name="Murphy L.D."/>
            <person name="Oliver K."/>
            <person name="O'Neil S."/>
            <person name="Rabbinowitsch E."/>
            <person name="Rajandream M.A."/>
            <person name="Rutherford K.M."/>
            <person name="Rutter S."/>
            <person name="Seeger K."/>
            <person name="Saunders D."/>
            <person name="Sharp S."/>
            <person name="Squares R."/>
            <person name="Squares S."/>
            <person name="Taylor K."/>
            <person name="Warren T."/>
            <person name="Wietzorrek A."/>
            <person name="Woodward J.R."/>
            <person name="Barrell B.G."/>
            <person name="Parkhill J."/>
            <person name="Hopwood D.A."/>
        </authorList>
    </citation>
    <scope>NUCLEOTIDE SEQUENCE [LARGE SCALE GENOMIC DNA]</scope>
    <source>
        <strain>ATCC BAA-471 / A3(2) / M145</strain>
    </source>
</reference>
<reference key="2">
    <citation type="journal article" date="2008" name="Enzyme Microb. Technol.">
        <title>Cloning, purification and characterization of two lipases from Streptomyces coelicolor A3(2).</title>
        <authorList>
            <person name="Cote A."/>
            <person name="Shareck F."/>
        </authorList>
    </citation>
    <scope>FUNCTION</scope>
    <scope>SUBSTRATE SPECIFICITY</scope>
    <scope>BIOPHYSICOCHEMICAL PROPERTIES</scope>
    <scope>ACTIVITY REGULATION</scope>
    <scope>SUBCELLULAR LOCATION</scope>
    <source>
        <strain>ATCC BAA-471 / A3(2) / M145</strain>
    </source>
</reference>
<accession>Q93J06</accession>
<proteinExistence type="evidence at protein level"/>